<proteinExistence type="inferred from homology"/>
<evidence type="ECO:0000255" key="1">
    <source>
        <dbReference type="HAMAP-Rule" id="MF_00125"/>
    </source>
</evidence>
<protein>
    <recommendedName>
        <fullName evidence="1">ATP phosphoribosyltransferase regulatory subunit</fullName>
    </recommendedName>
</protein>
<sequence>MTISETWLLPDGVADVLPEQAQVIEKLRREAIDFLAVRGYQLVYTPFIEYIESLSSLSESNQDLDLVTFKVIDQLSGRLLGIRADMTPQVARIDAHVRPVEGVARYCYAGTVLHTKPQNFNATRAPLQLGAELYGHDSIEADVEMVDVMLGLIENAYTLQGAHLDLGHVGLFRSLVKYAGLSKNEEHELSDLYQRKALPELAEFTQNLNMGSDFYALGRYASDLDALQAHLSADILKDAEFDAALNALKTTLEQIKNRWPALNVGIDVVELRSYHYHTGLMYAVYAPNRAAPLAQGGRYDGIGEHFGRARPATGFSCDLYALGANQFAEIETVVAPKGTEADLLKAIANARSEGLRVVQLLGNDDLSSIPYATHQLVLQNGQWNIEKI</sequence>
<gene>
    <name evidence="1" type="primary">hisZ</name>
    <name type="ordered locus">ABAYE2593</name>
</gene>
<organism>
    <name type="scientific">Acinetobacter baumannii (strain AYE)</name>
    <dbReference type="NCBI Taxonomy" id="509173"/>
    <lineage>
        <taxon>Bacteria</taxon>
        <taxon>Pseudomonadati</taxon>
        <taxon>Pseudomonadota</taxon>
        <taxon>Gammaproteobacteria</taxon>
        <taxon>Moraxellales</taxon>
        <taxon>Moraxellaceae</taxon>
        <taxon>Acinetobacter</taxon>
        <taxon>Acinetobacter calcoaceticus/baumannii complex</taxon>
    </lineage>
</organism>
<name>HISZ_ACIBY</name>
<reference key="1">
    <citation type="journal article" date="2008" name="PLoS ONE">
        <title>Comparative analysis of Acinetobacters: three genomes for three lifestyles.</title>
        <authorList>
            <person name="Vallenet D."/>
            <person name="Nordmann P."/>
            <person name="Barbe V."/>
            <person name="Poirel L."/>
            <person name="Mangenot S."/>
            <person name="Bataille E."/>
            <person name="Dossat C."/>
            <person name="Gas S."/>
            <person name="Kreimeyer A."/>
            <person name="Lenoble P."/>
            <person name="Oztas S."/>
            <person name="Poulain J."/>
            <person name="Segurens B."/>
            <person name="Robert C."/>
            <person name="Abergel C."/>
            <person name="Claverie J.-M."/>
            <person name="Raoult D."/>
            <person name="Medigue C."/>
            <person name="Weissenbach J."/>
            <person name="Cruveiller S."/>
        </authorList>
    </citation>
    <scope>NUCLEOTIDE SEQUENCE [LARGE SCALE GENOMIC DNA]</scope>
    <source>
        <strain>AYE</strain>
    </source>
</reference>
<dbReference type="EMBL" id="CU459141">
    <property type="protein sequence ID" value="CAM87430.1"/>
    <property type="molecule type" value="Genomic_DNA"/>
</dbReference>
<dbReference type="RefSeq" id="WP_000155680.1">
    <property type="nucleotide sequence ID" value="NZ_JBDGFB010000007.1"/>
</dbReference>
<dbReference type="SMR" id="B0VAI1"/>
<dbReference type="EnsemblBacteria" id="CAM87430">
    <property type="protein sequence ID" value="CAM87430"/>
    <property type="gene ID" value="ABAYE2593"/>
</dbReference>
<dbReference type="KEGG" id="aby:ABAYE2593"/>
<dbReference type="HOGENOM" id="CLU_025113_0_1_6"/>
<dbReference type="UniPathway" id="UPA00031">
    <property type="reaction ID" value="UER00006"/>
</dbReference>
<dbReference type="GO" id="GO:0005737">
    <property type="term" value="C:cytoplasm"/>
    <property type="evidence" value="ECO:0007669"/>
    <property type="project" value="UniProtKB-SubCell"/>
</dbReference>
<dbReference type="GO" id="GO:0000105">
    <property type="term" value="P:L-histidine biosynthetic process"/>
    <property type="evidence" value="ECO:0007669"/>
    <property type="project" value="UniProtKB-UniRule"/>
</dbReference>
<dbReference type="Gene3D" id="3.30.930.10">
    <property type="entry name" value="Bira Bifunctional Protein, Domain 2"/>
    <property type="match status" value="1"/>
</dbReference>
<dbReference type="HAMAP" id="MF_00125">
    <property type="entry name" value="HisZ"/>
    <property type="match status" value="1"/>
</dbReference>
<dbReference type="InterPro" id="IPR045864">
    <property type="entry name" value="aa-tRNA-synth_II/BPL/LPL"/>
</dbReference>
<dbReference type="InterPro" id="IPR041715">
    <property type="entry name" value="HisRS-like_core"/>
</dbReference>
<dbReference type="InterPro" id="IPR004516">
    <property type="entry name" value="HisRS/HisZ"/>
</dbReference>
<dbReference type="InterPro" id="IPR004517">
    <property type="entry name" value="HisZ"/>
</dbReference>
<dbReference type="NCBIfam" id="NF008935">
    <property type="entry name" value="PRK12292.1-1"/>
    <property type="match status" value="1"/>
</dbReference>
<dbReference type="NCBIfam" id="NF009086">
    <property type="entry name" value="PRK12421.1"/>
    <property type="match status" value="1"/>
</dbReference>
<dbReference type="PANTHER" id="PTHR11476:SF7">
    <property type="entry name" value="HISTIDINE--TRNA LIGASE"/>
    <property type="match status" value="1"/>
</dbReference>
<dbReference type="PANTHER" id="PTHR11476">
    <property type="entry name" value="HISTIDYL-TRNA SYNTHETASE"/>
    <property type="match status" value="1"/>
</dbReference>
<dbReference type="Pfam" id="PF13393">
    <property type="entry name" value="tRNA-synt_His"/>
    <property type="match status" value="1"/>
</dbReference>
<dbReference type="PIRSF" id="PIRSF001549">
    <property type="entry name" value="His-tRNA_synth"/>
    <property type="match status" value="1"/>
</dbReference>
<dbReference type="SUPFAM" id="SSF55681">
    <property type="entry name" value="Class II aaRS and biotin synthetases"/>
    <property type="match status" value="1"/>
</dbReference>
<keyword id="KW-0028">Amino-acid biosynthesis</keyword>
<keyword id="KW-0963">Cytoplasm</keyword>
<keyword id="KW-0368">Histidine biosynthesis</keyword>
<comment type="function">
    <text evidence="1">Required for the first step of histidine biosynthesis. May allow the feedback regulation of ATP phosphoribosyltransferase activity by histidine.</text>
</comment>
<comment type="pathway">
    <text evidence="1">Amino-acid biosynthesis; L-histidine biosynthesis; L-histidine from 5-phospho-alpha-D-ribose 1-diphosphate: step 1/9.</text>
</comment>
<comment type="subunit">
    <text evidence="1">Heteromultimer composed of HisG and HisZ subunits.</text>
</comment>
<comment type="subcellular location">
    <subcellularLocation>
        <location evidence="1">Cytoplasm</location>
    </subcellularLocation>
</comment>
<comment type="miscellaneous">
    <text>This function is generally fulfilled by the C-terminal part of HisG, which is missing in some bacteria such as this one.</text>
</comment>
<comment type="similarity">
    <text evidence="1">Belongs to the class-II aminoacyl-tRNA synthetase family. HisZ subfamily.</text>
</comment>
<feature type="chain" id="PRO_1000095442" description="ATP phosphoribosyltransferase regulatory subunit">
    <location>
        <begin position="1"/>
        <end position="388"/>
    </location>
</feature>
<accession>B0VAI1</accession>